<keyword id="KW-0028">Amino-acid biosynthesis</keyword>
<keyword id="KW-0963">Cytoplasm</keyword>
<keyword id="KW-0554">One-carbon metabolism</keyword>
<keyword id="KW-0663">Pyridoxal phosphate</keyword>
<keyword id="KW-1185">Reference proteome</keyword>
<keyword id="KW-0808">Transferase</keyword>
<accession>P24060</accession>
<protein>
    <recommendedName>
        <fullName evidence="1">Serine hydroxymethyltransferase</fullName>
        <shortName evidence="1">SHMT</shortName>
        <shortName evidence="1">Serine methylase</shortName>
        <ecNumber evidence="1">2.1.2.1</ecNumber>
    </recommendedName>
</protein>
<proteinExistence type="inferred from homology"/>
<organism>
    <name type="scientific">Bradyrhizobium diazoefficiens (strain JCM 10833 / BCRC 13528 / IAM 13628 / NBRC 14792 / USDA 110)</name>
    <dbReference type="NCBI Taxonomy" id="224911"/>
    <lineage>
        <taxon>Bacteria</taxon>
        <taxon>Pseudomonadati</taxon>
        <taxon>Pseudomonadota</taxon>
        <taxon>Alphaproteobacteria</taxon>
        <taxon>Hyphomicrobiales</taxon>
        <taxon>Nitrobacteraceae</taxon>
        <taxon>Bradyrhizobium</taxon>
    </lineage>
</organism>
<evidence type="ECO:0000255" key="1">
    <source>
        <dbReference type="HAMAP-Rule" id="MF_00051"/>
    </source>
</evidence>
<evidence type="ECO:0000305" key="2"/>
<reference key="1">
    <citation type="journal article" date="1991" name="Mol. Microbiol.">
        <title>Identification of glyA as a symbiotically essential gene in Bradyrhizobium japonicum.</title>
        <authorList>
            <person name="Rossbach S."/>
            <person name="Hennecke H."/>
        </authorList>
    </citation>
    <scope>NUCLEOTIDE SEQUENCE [GENOMIC DNA]</scope>
    <source>
        <strain>USDA 110spc4</strain>
    </source>
</reference>
<reference key="2">
    <citation type="journal article" date="2002" name="DNA Res.">
        <title>Complete genomic sequence of nitrogen-fixing symbiotic bacterium Bradyrhizobium japonicum USDA110.</title>
        <authorList>
            <person name="Kaneko T."/>
            <person name="Nakamura Y."/>
            <person name="Sato S."/>
            <person name="Minamisawa K."/>
            <person name="Uchiumi T."/>
            <person name="Sasamoto S."/>
            <person name="Watanabe A."/>
            <person name="Idesawa K."/>
            <person name="Iriguchi M."/>
            <person name="Kawashima K."/>
            <person name="Kohara M."/>
            <person name="Matsumoto M."/>
            <person name="Shimpo S."/>
            <person name="Tsuruoka H."/>
            <person name="Wada T."/>
            <person name="Yamada M."/>
            <person name="Tabata S."/>
        </authorList>
    </citation>
    <scope>NUCLEOTIDE SEQUENCE [LARGE SCALE GENOMIC DNA]</scope>
    <source>
        <strain>JCM 10833 / BCRC 13528 / IAM 13628 / NBRC 14792 / USDA 110</strain>
    </source>
</reference>
<feature type="chain" id="PRO_0000113544" description="Serine hydroxymethyltransferase">
    <location>
        <begin position="1"/>
        <end position="432"/>
    </location>
</feature>
<feature type="binding site" evidence="1">
    <location>
        <position position="131"/>
    </location>
    <ligand>
        <name>(6S)-5,6,7,8-tetrahydrofolate</name>
        <dbReference type="ChEBI" id="CHEBI:57453"/>
    </ligand>
</feature>
<feature type="binding site" evidence="1">
    <location>
        <begin position="135"/>
        <end position="137"/>
    </location>
    <ligand>
        <name>(6S)-5,6,7,8-tetrahydrofolate</name>
        <dbReference type="ChEBI" id="CHEBI:57453"/>
    </ligand>
</feature>
<feature type="site" description="Plays an important role in substrate specificity" evidence="1">
    <location>
        <position position="239"/>
    </location>
</feature>
<feature type="modified residue" description="N6-(pyridoxal phosphate)lysine" evidence="1">
    <location>
        <position position="240"/>
    </location>
</feature>
<feature type="sequence conflict" description="In Ref. 1; CAA38450." evidence="2" ref="1">
    <original>R</original>
    <variation>L</variation>
    <location>
        <position position="73"/>
    </location>
</feature>
<comment type="function">
    <text evidence="1">Catalyzes the reversible interconversion of serine and glycine with tetrahydrofolate (THF) serving as the one-carbon carrier. This reaction serves as the major source of one-carbon groups required for the biosynthesis of purines, thymidylate, methionine, and other important biomolecules. Also exhibits THF-independent aldolase activity toward beta-hydroxyamino acids, producing glycine and aldehydes, via a retro-aldol mechanism.</text>
</comment>
<comment type="catalytic activity">
    <reaction evidence="1">
        <text>(6R)-5,10-methylene-5,6,7,8-tetrahydrofolate + glycine + H2O = (6S)-5,6,7,8-tetrahydrofolate + L-serine</text>
        <dbReference type="Rhea" id="RHEA:15481"/>
        <dbReference type="ChEBI" id="CHEBI:15377"/>
        <dbReference type="ChEBI" id="CHEBI:15636"/>
        <dbReference type="ChEBI" id="CHEBI:33384"/>
        <dbReference type="ChEBI" id="CHEBI:57305"/>
        <dbReference type="ChEBI" id="CHEBI:57453"/>
        <dbReference type="EC" id="2.1.2.1"/>
    </reaction>
</comment>
<comment type="cofactor">
    <cofactor evidence="1">
        <name>pyridoxal 5'-phosphate</name>
        <dbReference type="ChEBI" id="CHEBI:597326"/>
    </cofactor>
</comment>
<comment type="pathway">
    <text evidence="1">One-carbon metabolism; tetrahydrofolate interconversion.</text>
</comment>
<comment type="pathway">
    <text evidence="1">Amino-acid biosynthesis; glycine biosynthesis; glycine from L-serine: step 1/1.</text>
</comment>
<comment type="subunit">
    <text evidence="1">Homodimer.</text>
</comment>
<comment type="subcellular location">
    <subcellularLocation>
        <location evidence="1">Cytoplasm</location>
    </subcellularLocation>
</comment>
<comment type="similarity">
    <text evidence="1">Belongs to the SHMT family.</text>
</comment>
<sequence length="432" mass="46035">MTSAKTASAPDSFFTASLDQADPEIAAAIKGELGRQRHEVELIASENIVSRAVLEAQGSVMTNKYAEGYPGARYYGGCEWVDVAENLAIDRAKKLFGAGFANVQPNSGSQMNQAVFLALLQPGDTFMGLDLAAGGHLTHGSPVNMSGKWFKAAHYTVRREDQIIDMDAVQKQAEEIKPKLIVAGGSAYSRAWDFKRFREIADSVGAYLLVDMAHFAGLVAGGVHASPVPYAHVTTTTTHKSLRGPRGGLILSNDETLAKKLNSAIFPGLQGGPLMHVIAAKAVAFGEALRPDFKVYAKNVVENAKALAEAMKSHGFDIVSGGTDNHLMLVDLRPKGLKGNVSEKALVRAAITCNKNGIPFDPEKPFVTSGLRLGTPAATTRGFGVAEFQQVGGMIAEVLNAIAQSDDGKAPLVEAAIKERVKALTDRFPIYQ</sequence>
<name>GLYA_BRADU</name>
<dbReference type="EC" id="2.1.2.1" evidence="1"/>
<dbReference type="EMBL" id="X54638">
    <property type="protein sequence ID" value="CAA38450.1"/>
    <property type="molecule type" value="Genomic_DNA"/>
</dbReference>
<dbReference type="EMBL" id="BA000040">
    <property type="protein sequence ID" value="BAC50298.1"/>
    <property type="molecule type" value="Genomic_DNA"/>
</dbReference>
<dbReference type="PIR" id="S15203">
    <property type="entry name" value="S15203"/>
</dbReference>
<dbReference type="RefSeq" id="NP_771673.1">
    <property type="nucleotide sequence ID" value="NC_004463.1"/>
</dbReference>
<dbReference type="RefSeq" id="WP_011087794.1">
    <property type="nucleotide sequence ID" value="NC_004463.1"/>
</dbReference>
<dbReference type="SMR" id="P24060"/>
<dbReference type="FunCoup" id="P24060">
    <property type="interactions" value="714"/>
</dbReference>
<dbReference type="STRING" id="224911.AAV28_22525"/>
<dbReference type="EnsemblBacteria" id="BAC50298">
    <property type="protein sequence ID" value="BAC50298"/>
    <property type="gene ID" value="BAC50298"/>
</dbReference>
<dbReference type="GeneID" id="46492038"/>
<dbReference type="KEGG" id="bja:bll5033"/>
<dbReference type="PATRIC" id="fig|224911.44.peg.4897"/>
<dbReference type="eggNOG" id="COG0112">
    <property type="taxonomic scope" value="Bacteria"/>
</dbReference>
<dbReference type="HOGENOM" id="CLU_022477_2_1_5"/>
<dbReference type="InParanoid" id="P24060"/>
<dbReference type="OrthoDB" id="9803846at2"/>
<dbReference type="PhylomeDB" id="P24060"/>
<dbReference type="UniPathway" id="UPA00193"/>
<dbReference type="UniPathway" id="UPA00288">
    <property type="reaction ID" value="UER01023"/>
</dbReference>
<dbReference type="Proteomes" id="UP000002526">
    <property type="component" value="Chromosome"/>
</dbReference>
<dbReference type="GO" id="GO:0005737">
    <property type="term" value="C:cytoplasm"/>
    <property type="evidence" value="ECO:0000318"/>
    <property type="project" value="GO_Central"/>
</dbReference>
<dbReference type="GO" id="GO:0005829">
    <property type="term" value="C:cytosol"/>
    <property type="evidence" value="ECO:0000318"/>
    <property type="project" value="GO_Central"/>
</dbReference>
<dbReference type="GO" id="GO:0004372">
    <property type="term" value="F:glycine hydroxymethyltransferase activity"/>
    <property type="evidence" value="ECO:0000318"/>
    <property type="project" value="GO_Central"/>
</dbReference>
<dbReference type="GO" id="GO:0030170">
    <property type="term" value="F:pyridoxal phosphate binding"/>
    <property type="evidence" value="ECO:0000318"/>
    <property type="project" value="GO_Central"/>
</dbReference>
<dbReference type="GO" id="GO:0019264">
    <property type="term" value="P:glycine biosynthetic process from serine"/>
    <property type="evidence" value="ECO:0000318"/>
    <property type="project" value="GO_Central"/>
</dbReference>
<dbReference type="GO" id="GO:0035999">
    <property type="term" value="P:tetrahydrofolate interconversion"/>
    <property type="evidence" value="ECO:0007669"/>
    <property type="project" value="UniProtKB-UniRule"/>
</dbReference>
<dbReference type="GO" id="GO:0046653">
    <property type="term" value="P:tetrahydrofolate metabolic process"/>
    <property type="evidence" value="ECO:0000318"/>
    <property type="project" value="GO_Central"/>
</dbReference>
<dbReference type="CDD" id="cd00378">
    <property type="entry name" value="SHMT"/>
    <property type="match status" value="1"/>
</dbReference>
<dbReference type="FunFam" id="3.40.640.10:FF:000001">
    <property type="entry name" value="Serine hydroxymethyltransferase"/>
    <property type="match status" value="1"/>
</dbReference>
<dbReference type="FunFam" id="3.90.1150.10:FF:000003">
    <property type="entry name" value="Serine hydroxymethyltransferase"/>
    <property type="match status" value="1"/>
</dbReference>
<dbReference type="Gene3D" id="3.90.1150.10">
    <property type="entry name" value="Aspartate Aminotransferase, domain 1"/>
    <property type="match status" value="1"/>
</dbReference>
<dbReference type="Gene3D" id="3.40.640.10">
    <property type="entry name" value="Type I PLP-dependent aspartate aminotransferase-like (Major domain)"/>
    <property type="match status" value="1"/>
</dbReference>
<dbReference type="HAMAP" id="MF_00051">
    <property type="entry name" value="SHMT"/>
    <property type="match status" value="1"/>
</dbReference>
<dbReference type="InterPro" id="IPR015424">
    <property type="entry name" value="PyrdxlP-dep_Trfase"/>
</dbReference>
<dbReference type="InterPro" id="IPR015421">
    <property type="entry name" value="PyrdxlP-dep_Trfase_major"/>
</dbReference>
<dbReference type="InterPro" id="IPR015422">
    <property type="entry name" value="PyrdxlP-dep_Trfase_small"/>
</dbReference>
<dbReference type="InterPro" id="IPR001085">
    <property type="entry name" value="Ser_HO-MeTrfase"/>
</dbReference>
<dbReference type="InterPro" id="IPR049943">
    <property type="entry name" value="Ser_HO-MeTrfase-like"/>
</dbReference>
<dbReference type="InterPro" id="IPR019798">
    <property type="entry name" value="Ser_HO-MeTrfase_PLP_BS"/>
</dbReference>
<dbReference type="InterPro" id="IPR039429">
    <property type="entry name" value="SHMT-like_dom"/>
</dbReference>
<dbReference type="NCBIfam" id="NF000586">
    <property type="entry name" value="PRK00011.1"/>
    <property type="match status" value="1"/>
</dbReference>
<dbReference type="PANTHER" id="PTHR11680">
    <property type="entry name" value="SERINE HYDROXYMETHYLTRANSFERASE"/>
    <property type="match status" value="1"/>
</dbReference>
<dbReference type="PANTHER" id="PTHR11680:SF35">
    <property type="entry name" value="SERINE HYDROXYMETHYLTRANSFERASE 1"/>
    <property type="match status" value="1"/>
</dbReference>
<dbReference type="Pfam" id="PF00464">
    <property type="entry name" value="SHMT"/>
    <property type="match status" value="1"/>
</dbReference>
<dbReference type="PIRSF" id="PIRSF000412">
    <property type="entry name" value="SHMT"/>
    <property type="match status" value="1"/>
</dbReference>
<dbReference type="SUPFAM" id="SSF53383">
    <property type="entry name" value="PLP-dependent transferases"/>
    <property type="match status" value="1"/>
</dbReference>
<dbReference type="PROSITE" id="PS00096">
    <property type="entry name" value="SHMT"/>
    <property type="match status" value="1"/>
</dbReference>
<gene>
    <name evidence="1" type="primary">glyA</name>
    <name type="ordered locus">bll5033</name>
</gene>